<keyword id="KW-0067">ATP-binding</keyword>
<keyword id="KW-0173">Coenzyme A biosynthesis</keyword>
<keyword id="KW-0963">Cytoplasm</keyword>
<keyword id="KW-0418">Kinase</keyword>
<keyword id="KW-0547">Nucleotide-binding</keyword>
<keyword id="KW-0808">Transferase</keyword>
<dbReference type="EC" id="2.7.1.33" evidence="1"/>
<dbReference type="EMBL" id="CP001277">
    <property type="protein sequence ID" value="ACQ68340.1"/>
    <property type="molecule type" value="Genomic_DNA"/>
</dbReference>
<dbReference type="RefSeq" id="WP_015874104.1">
    <property type="nucleotide sequence ID" value="NC_012751.1"/>
</dbReference>
<dbReference type="SMR" id="C4K6Z7"/>
<dbReference type="STRING" id="572265.HDEF_1738"/>
<dbReference type="GeneID" id="66261333"/>
<dbReference type="KEGG" id="hde:HDEF_1738"/>
<dbReference type="eggNOG" id="COG1072">
    <property type="taxonomic scope" value="Bacteria"/>
</dbReference>
<dbReference type="HOGENOM" id="CLU_053818_1_1_6"/>
<dbReference type="UniPathway" id="UPA00241">
    <property type="reaction ID" value="UER00352"/>
</dbReference>
<dbReference type="Proteomes" id="UP000002334">
    <property type="component" value="Chromosome"/>
</dbReference>
<dbReference type="GO" id="GO:0005737">
    <property type="term" value="C:cytoplasm"/>
    <property type="evidence" value="ECO:0007669"/>
    <property type="project" value="UniProtKB-SubCell"/>
</dbReference>
<dbReference type="GO" id="GO:0005524">
    <property type="term" value="F:ATP binding"/>
    <property type="evidence" value="ECO:0007669"/>
    <property type="project" value="UniProtKB-UniRule"/>
</dbReference>
<dbReference type="GO" id="GO:0004594">
    <property type="term" value="F:pantothenate kinase activity"/>
    <property type="evidence" value="ECO:0007669"/>
    <property type="project" value="UniProtKB-UniRule"/>
</dbReference>
<dbReference type="GO" id="GO:0015937">
    <property type="term" value="P:coenzyme A biosynthetic process"/>
    <property type="evidence" value="ECO:0007669"/>
    <property type="project" value="UniProtKB-UniRule"/>
</dbReference>
<dbReference type="CDD" id="cd02025">
    <property type="entry name" value="PanK"/>
    <property type="match status" value="1"/>
</dbReference>
<dbReference type="FunFam" id="3.40.50.300:FF:000242">
    <property type="entry name" value="Pantothenate kinase"/>
    <property type="match status" value="1"/>
</dbReference>
<dbReference type="Gene3D" id="3.40.50.300">
    <property type="entry name" value="P-loop containing nucleotide triphosphate hydrolases"/>
    <property type="match status" value="1"/>
</dbReference>
<dbReference type="HAMAP" id="MF_00215">
    <property type="entry name" value="Pantothen_kinase_1"/>
    <property type="match status" value="1"/>
</dbReference>
<dbReference type="InterPro" id="IPR027417">
    <property type="entry name" value="P-loop_NTPase"/>
</dbReference>
<dbReference type="InterPro" id="IPR004566">
    <property type="entry name" value="PanK"/>
</dbReference>
<dbReference type="InterPro" id="IPR006083">
    <property type="entry name" value="PRK/URK"/>
</dbReference>
<dbReference type="NCBIfam" id="TIGR00554">
    <property type="entry name" value="panK_bact"/>
    <property type="match status" value="1"/>
</dbReference>
<dbReference type="PANTHER" id="PTHR10285">
    <property type="entry name" value="URIDINE KINASE"/>
    <property type="match status" value="1"/>
</dbReference>
<dbReference type="Pfam" id="PF00485">
    <property type="entry name" value="PRK"/>
    <property type="match status" value="1"/>
</dbReference>
<dbReference type="PIRSF" id="PIRSF000545">
    <property type="entry name" value="Pantothenate_kin"/>
    <property type="match status" value="1"/>
</dbReference>
<dbReference type="SUPFAM" id="SSF52540">
    <property type="entry name" value="P-loop containing nucleoside triphosphate hydrolases"/>
    <property type="match status" value="1"/>
</dbReference>
<name>COAA_HAMD5</name>
<sequence>MNPKNAHLATHYLQFDRAQWASLRDSVPLILTEEEIIRLRGINENLSLEEVAAIYLPLSRLLNFYISSNLRQRAILEEFLGTHKQNVPYVIGIAGSVAVGKSTTARLLQALLSRWPEHRRVELVTTDGFLHSNKVLTERGLMKKKGFPESYDMKNLVKFISRIKSGAPKVEAPVYSHLRYDIIPNQKKIVQQPDILILEGLNVLQSGMDYPHDPHHVFVSDFVDFSIYVDASYDLLAHWYINRFLQFRRGAFSDPNSYFHHYAQICEKEAMTVARRLWTEINGLNLNENILPTRERASLIMTKGDNHEVKSVWLKK</sequence>
<evidence type="ECO:0000255" key="1">
    <source>
        <dbReference type="HAMAP-Rule" id="MF_00215"/>
    </source>
</evidence>
<gene>
    <name evidence="1" type="primary">coaA</name>
    <name type="ordered locus">HDEF_1738</name>
</gene>
<protein>
    <recommendedName>
        <fullName evidence="1">Pantothenate kinase</fullName>
        <ecNumber evidence="1">2.7.1.33</ecNumber>
    </recommendedName>
    <alternativeName>
        <fullName evidence="1">Pantothenic acid kinase</fullName>
    </alternativeName>
</protein>
<accession>C4K6Z7</accession>
<reference key="1">
    <citation type="journal article" date="2009" name="Proc. Natl. Acad. Sci. U.S.A.">
        <title>Hamiltonella defensa, genome evolution of protective bacterial endosymbiont from pathogenic ancestors.</title>
        <authorList>
            <person name="Degnan P.H."/>
            <person name="Yu Y."/>
            <person name="Sisneros N."/>
            <person name="Wing R.A."/>
            <person name="Moran N.A."/>
        </authorList>
    </citation>
    <scope>NUCLEOTIDE SEQUENCE [LARGE SCALE GENOMIC DNA]</scope>
    <source>
        <strain>5AT</strain>
    </source>
</reference>
<organism>
    <name type="scientific">Hamiltonella defensa subsp. Acyrthosiphon pisum (strain 5AT)</name>
    <dbReference type="NCBI Taxonomy" id="572265"/>
    <lineage>
        <taxon>Bacteria</taxon>
        <taxon>Pseudomonadati</taxon>
        <taxon>Pseudomonadota</taxon>
        <taxon>Gammaproteobacteria</taxon>
        <taxon>Enterobacterales</taxon>
        <taxon>Enterobacteriaceae</taxon>
        <taxon>aphid secondary symbionts</taxon>
        <taxon>Candidatus Hamiltonella</taxon>
    </lineage>
</organism>
<feature type="chain" id="PRO_1000204216" description="Pantothenate kinase">
    <location>
        <begin position="1"/>
        <end position="316"/>
    </location>
</feature>
<feature type="binding site" evidence="1">
    <location>
        <begin position="95"/>
        <end position="102"/>
    </location>
    <ligand>
        <name>ATP</name>
        <dbReference type="ChEBI" id="CHEBI:30616"/>
    </ligand>
</feature>
<proteinExistence type="inferred from homology"/>
<comment type="catalytic activity">
    <reaction evidence="1">
        <text>(R)-pantothenate + ATP = (R)-4'-phosphopantothenate + ADP + H(+)</text>
        <dbReference type="Rhea" id="RHEA:16373"/>
        <dbReference type="ChEBI" id="CHEBI:10986"/>
        <dbReference type="ChEBI" id="CHEBI:15378"/>
        <dbReference type="ChEBI" id="CHEBI:29032"/>
        <dbReference type="ChEBI" id="CHEBI:30616"/>
        <dbReference type="ChEBI" id="CHEBI:456216"/>
        <dbReference type="EC" id="2.7.1.33"/>
    </reaction>
</comment>
<comment type="pathway">
    <text evidence="1">Cofactor biosynthesis; coenzyme A biosynthesis; CoA from (R)-pantothenate: step 1/5.</text>
</comment>
<comment type="subcellular location">
    <subcellularLocation>
        <location evidence="1">Cytoplasm</location>
    </subcellularLocation>
</comment>
<comment type="similarity">
    <text evidence="1">Belongs to the prokaryotic pantothenate kinase family.</text>
</comment>